<keyword id="KW-0687">Ribonucleoprotein</keyword>
<keyword id="KW-0689">Ribosomal protein</keyword>
<feature type="chain" id="PRO_1000081600" description="Large ribosomal subunit protein bL35">
    <location>
        <begin position="1"/>
        <end position="64"/>
    </location>
</feature>
<feature type="region of interest" description="Disordered" evidence="2">
    <location>
        <begin position="22"/>
        <end position="44"/>
    </location>
</feature>
<accession>B0RHC1</accession>
<dbReference type="EMBL" id="AM849034">
    <property type="protein sequence ID" value="CAQ01338.1"/>
    <property type="molecule type" value="Genomic_DNA"/>
</dbReference>
<dbReference type="RefSeq" id="WP_012298616.1">
    <property type="nucleotide sequence ID" value="NZ_MZMN01000003.1"/>
</dbReference>
<dbReference type="SMR" id="B0RHC1"/>
<dbReference type="STRING" id="31964.CMS1222"/>
<dbReference type="KEGG" id="cms:CMS1222"/>
<dbReference type="eggNOG" id="COG0291">
    <property type="taxonomic scope" value="Bacteria"/>
</dbReference>
<dbReference type="HOGENOM" id="CLU_169643_4_2_11"/>
<dbReference type="OrthoDB" id="9804851at2"/>
<dbReference type="Proteomes" id="UP000001318">
    <property type="component" value="Chromosome"/>
</dbReference>
<dbReference type="GO" id="GO:0022625">
    <property type="term" value="C:cytosolic large ribosomal subunit"/>
    <property type="evidence" value="ECO:0007669"/>
    <property type="project" value="TreeGrafter"/>
</dbReference>
<dbReference type="GO" id="GO:0003735">
    <property type="term" value="F:structural constituent of ribosome"/>
    <property type="evidence" value="ECO:0007669"/>
    <property type="project" value="InterPro"/>
</dbReference>
<dbReference type="GO" id="GO:0006412">
    <property type="term" value="P:translation"/>
    <property type="evidence" value="ECO:0007669"/>
    <property type="project" value="UniProtKB-UniRule"/>
</dbReference>
<dbReference type="FunFam" id="4.10.410.60:FF:000001">
    <property type="entry name" value="50S ribosomal protein L35"/>
    <property type="match status" value="1"/>
</dbReference>
<dbReference type="Gene3D" id="4.10.410.60">
    <property type="match status" value="1"/>
</dbReference>
<dbReference type="HAMAP" id="MF_00514">
    <property type="entry name" value="Ribosomal_bL35"/>
    <property type="match status" value="1"/>
</dbReference>
<dbReference type="InterPro" id="IPR001706">
    <property type="entry name" value="Ribosomal_bL35"/>
</dbReference>
<dbReference type="InterPro" id="IPR021137">
    <property type="entry name" value="Ribosomal_bL35-like"/>
</dbReference>
<dbReference type="InterPro" id="IPR018265">
    <property type="entry name" value="Ribosomal_bL35_CS"/>
</dbReference>
<dbReference type="InterPro" id="IPR037229">
    <property type="entry name" value="Ribosomal_bL35_sf"/>
</dbReference>
<dbReference type="NCBIfam" id="TIGR00001">
    <property type="entry name" value="rpmI_bact"/>
    <property type="match status" value="1"/>
</dbReference>
<dbReference type="PANTHER" id="PTHR33343">
    <property type="entry name" value="54S RIBOSOMAL PROTEIN BL35M"/>
    <property type="match status" value="1"/>
</dbReference>
<dbReference type="PANTHER" id="PTHR33343:SF1">
    <property type="entry name" value="LARGE RIBOSOMAL SUBUNIT PROTEIN BL35M"/>
    <property type="match status" value="1"/>
</dbReference>
<dbReference type="Pfam" id="PF01632">
    <property type="entry name" value="Ribosomal_L35p"/>
    <property type="match status" value="1"/>
</dbReference>
<dbReference type="PRINTS" id="PR00064">
    <property type="entry name" value="RIBOSOMALL35"/>
</dbReference>
<dbReference type="SUPFAM" id="SSF143034">
    <property type="entry name" value="L35p-like"/>
    <property type="match status" value="1"/>
</dbReference>
<dbReference type="PROSITE" id="PS00936">
    <property type="entry name" value="RIBOSOMAL_L35"/>
    <property type="match status" value="1"/>
</dbReference>
<comment type="similarity">
    <text evidence="1">Belongs to the bacterial ribosomal protein bL35 family.</text>
</comment>
<name>RL35_CLASE</name>
<proteinExistence type="inferred from homology"/>
<sequence length="64" mass="7201">MPKQKTHSGAKKRFKVTGSGKIMKQQAGMRHNLEVKSSKRKARLNQDQPLAKADMKVAKKLLGR</sequence>
<organism>
    <name type="scientific">Clavibacter sepedonicus</name>
    <name type="common">Clavibacter michiganensis subsp. sepedonicus</name>
    <dbReference type="NCBI Taxonomy" id="31964"/>
    <lineage>
        <taxon>Bacteria</taxon>
        <taxon>Bacillati</taxon>
        <taxon>Actinomycetota</taxon>
        <taxon>Actinomycetes</taxon>
        <taxon>Micrococcales</taxon>
        <taxon>Microbacteriaceae</taxon>
        <taxon>Clavibacter</taxon>
    </lineage>
</organism>
<reference key="1">
    <citation type="journal article" date="2008" name="J. Bacteriol.">
        <title>Genome of the actinomycete plant pathogen Clavibacter michiganensis subsp. sepedonicus suggests recent niche adaptation.</title>
        <authorList>
            <person name="Bentley S.D."/>
            <person name="Corton C."/>
            <person name="Brown S.E."/>
            <person name="Barron A."/>
            <person name="Clark L."/>
            <person name="Doggett J."/>
            <person name="Harris B."/>
            <person name="Ormond D."/>
            <person name="Quail M.A."/>
            <person name="May G."/>
            <person name="Francis D."/>
            <person name="Knudson D."/>
            <person name="Parkhill J."/>
            <person name="Ishimaru C.A."/>
        </authorList>
    </citation>
    <scope>NUCLEOTIDE SEQUENCE [LARGE SCALE GENOMIC DNA]</scope>
    <source>
        <strain>ATCC 33113 / DSM 20744 / JCM 9667 / LMG 2889 / ICMP 2535 / C-1</strain>
    </source>
</reference>
<protein>
    <recommendedName>
        <fullName evidence="1">Large ribosomal subunit protein bL35</fullName>
    </recommendedName>
    <alternativeName>
        <fullName evidence="3">50S ribosomal protein L35</fullName>
    </alternativeName>
</protein>
<evidence type="ECO:0000255" key="1">
    <source>
        <dbReference type="HAMAP-Rule" id="MF_00514"/>
    </source>
</evidence>
<evidence type="ECO:0000256" key="2">
    <source>
        <dbReference type="SAM" id="MobiDB-lite"/>
    </source>
</evidence>
<evidence type="ECO:0000305" key="3"/>
<gene>
    <name evidence="1" type="primary">rpmI</name>
    <name type="ordered locus">CMS1222</name>
</gene>